<gene>
    <name evidence="4" type="primary">Tmigd1</name>
    <name evidence="1" type="synonym">Tmigd</name>
</gene>
<name>TMIG1_MOUSE</name>
<feature type="signal peptide" evidence="2">
    <location>
        <begin position="1"/>
        <end position="26"/>
    </location>
</feature>
<feature type="chain" id="PRO_0000045791" description="Transmembrane and immunoglobulin domain-containing protein 1">
    <location>
        <begin position="27"/>
        <end position="261"/>
    </location>
</feature>
<feature type="topological domain" description="Extracellular" evidence="2">
    <location>
        <begin position="27"/>
        <end position="215"/>
    </location>
</feature>
<feature type="transmembrane region" description="Helical" evidence="2">
    <location>
        <begin position="216"/>
        <end position="236"/>
    </location>
</feature>
<feature type="topological domain" description="Cytoplasmic" evidence="2">
    <location>
        <begin position="237"/>
        <end position="261"/>
    </location>
</feature>
<feature type="domain" description="Ig-like C2-type 1">
    <location>
        <begin position="27"/>
        <end position="113"/>
    </location>
</feature>
<feature type="domain" description="Ig-like C2-type 2">
    <location>
        <begin position="121"/>
        <end position="206"/>
    </location>
</feature>
<feature type="glycosylation site" description="N-linked (GlcNAc...) asparagine" evidence="2">
    <location>
        <position position="57"/>
    </location>
</feature>
<feature type="glycosylation site" description="N-linked (GlcNAc...) asparagine" evidence="2">
    <location>
        <position position="82"/>
    </location>
</feature>
<feature type="glycosylation site" description="N-linked (GlcNAc...) asparagine" evidence="2">
    <location>
        <position position="92"/>
    </location>
</feature>
<feature type="glycosylation site" description="N-linked (GlcNAc...) asparagine" evidence="2">
    <location>
        <position position="117"/>
    </location>
</feature>
<feature type="glycosylation site" description="N-linked (GlcNAc...) asparagine" evidence="2">
    <location>
        <position position="157"/>
    </location>
</feature>
<feature type="glycosylation site" description="N-linked (GlcNAc...) asparagine" evidence="2">
    <location>
        <position position="189"/>
    </location>
</feature>
<feature type="disulfide bond" evidence="3">
    <location>
        <begin position="53"/>
        <end position="102"/>
    </location>
</feature>
<feature type="disulfide bond" evidence="3">
    <location>
        <begin position="142"/>
        <end position="194"/>
    </location>
</feature>
<keyword id="KW-1003">Cell membrane</keyword>
<keyword id="KW-0963">Cytoplasm</keyword>
<keyword id="KW-1015">Disulfide bond</keyword>
<keyword id="KW-0325">Glycoprotein</keyword>
<keyword id="KW-0393">Immunoglobulin domain</keyword>
<keyword id="KW-0472">Membrane</keyword>
<keyword id="KW-1185">Reference proteome</keyword>
<keyword id="KW-0677">Repeat</keyword>
<keyword id="KW-0732">Signal</keyword>
<keyword id="KW-0812">Transmembrane</keyword>
<keyword id="KW-1133">Transmembrane helix</keyword>
<evidence type="ECO:0000250" key="1">
    <source>
        <dbReference type="UniProtKB" id="Q6UXZ0"/>
    </source>
</evidence>
<evidence type="ECO:0000255" key="2"/>
<evidence type="ECO:0000255" key="3">
    <source>
        <dbReference type="PROSITE-ProRule" id="PRU00114"/>
    </source>
</evidence>
<evidence type="ECO:0000312" key="4">
    <source>
        <dbReference type="MGI" id="MGI:1913851"/>
    </source>
</evidence>
<accession>Q9D7L8</accession>
<accession>Q8R202</accession>
<reference key="1">
    <citation type="journal article" date="2005" name="Science">
        <title>The transcriptional landscape of the mammalian genome.</title>
        <authorList>
            <person name="Carninci P."/>
            <person name="Kasukawa T."/>
            <person name="Katayama S."/>
            <person name="Gough J."/>
            <person name="Frith M.C."/>
            <person name="Maeda N."/>
            <person name="Oyama R."/>
            <person name="Ravasi T."/>
            <person name="Lenhard B."/>
            <person name="Wells C."/>
            <person name="Kodzius R."/>
            <person name="Shimokawa K."/>
            <person name="Bajic V.B."/>
            <person name="Brenner S.E."/>
            <person name="Batalov S."/>
            <person name="Forrest A.R."/>
            <person name="Zavolan M."/>
            <person name="Davis M.J."/>
            <person name="Wilming L.G."/>
            <person name="Aidinis V."/>
            <person name="Allen J.E."/>
            <person name="Ambesi-Impiombato A."/>
            <person name="Apweiler R."/>
            <person name="Aturaliya R.N."/>
            <person name="Bailey T.L."/>
            <person name="Bansal M."/>
            <person name="Baxter L."/>
            <person name="Beisel K.W."/>
            <person name="Bersano T."/>
            <person name="Bono H."/>
            <person name="Chalk A.M."/>
            <person name="Chiu K.P."/>
            <person name="Choudhary V."/>
            <person name="Christoffels A."/>
            <person name="Clutterbuck D.R."/>
            <person name="Crowe M.L."/>
            <person name="Dalla E."/>
            <person name="Dalrymple B.P."/>
            <person name="de Bono B."/>
            <person name="Della Gatta G."/>
            <person name="di Bernardo D."/>
            <person name="Down T."/>
            <person name="Engstrom P."/>
            <person name="Fagiolini M."/>
            <person name="Faulkner G."/>
            <person name="Fletcher C.F."/>
            <person name="Fukushima T."/>
            <person name="Furuno M."/>
            <person name="Futaki S."/>
            <person name="Gariboldi M."/>
            <person name="Georgii-Hemming P."/>
            <person name="Gingeras T.R."/>
            <person name="Gojobori T."/>
            <person name="Green R.E."/>
            <person name="Gustincich S."/>
            <person name="Harbers M."/>
            <person name="Hayashi Y."/>
            <person name="Hensch T.K."/>
            <person name="Hirokawa N."/>
            <person name="Hill D."/>
            <person name="Huminiecki L."/>
            <person name="Iacono M."/>
            <person name="Ikeo K."/>
            <person name="Iwama A."/>
            <person name="Ishikawa T."/>
            <person name="Jakt M."/>
            <person name="Kanapin A."/>
            <person name="Katoh M."/>
            <person name="Kawasawa Y."/>
            <person name="Kelso J."/>
            <person name="Kitamura H."/>
            <person name="Kitano H."/>
            <person name="Kollias G."/>
            <person name="Krishnan S.P."/>
            <person name="Kruger A."/>
            <person name="Kummerfeld S.K."/>
            <person name="Kurochkin I.V."/>
            <person name="Lareau L.F."/>
            <person name="Lazarevic D."/>
            <person name="Lipovich L."/>
            <person name="Liu J."/>
            <person name="Liuni S."/>
            <person name="McWilliam S."/>
            <person name="Madan Babu M."/>
            <person name="Madera M."/>
            <person name="Marchionni L."/>
            <person name="Matsuda H."/>
            <person name="Matsuzawa S."/>
            <person name="Miki H."/>
            <person name="Mignone F."/>
            <person name="Miyake S."/>
            <person name="Morris K."/>
            <person name="Mottagui-Tabar S."/>
            <person name="Mulder N."/>
            <person name="Nakano N."/>
            <person name="Nakauchi H."/>
            <person name="Ng P."/>
            <person name="Nilsson R."/>
            <person name="Nishiguchi S."/>
            <person name="Nishikawa S."/>
            <person name="Nori F."/>
            <person name="Ohara O."/>
            <person name="Okazaki Y."/>
            <person name="Orlando V."/>
            <person name="Pang K.C."/>
            <person name="Pavan W.J."/>
            <person name="Pavesi G."/>
            <person name="Pesole G."/>
            <person name="Petrovsky N."/>
            <person name="Piazza S."/>
            <person name="Reed J."/>
            <person name="Reid J.F."/>
            <person name="Ring B.Z."/>
            <person name="Ringwald M."/>
            <person name="Rost B."/>
            <person name="Ruan Y."/>
            <person name="Salzberg S.L."/>
            <person name="Sandelin A."/>
            <person name="Schneider C."/>
            <person name="Schoenbach C."/>
            <person name="Sekiguchi K."/>
            <person name="Semple C.A."/>
            <person name="Seno S."/>
            <person name="Sessa L."/>
            <person name="Sheng Y."/>
            <person name="Shibata Y."/>
            <person name="Shimada H."/>
            <person name="Shimada K."/>
            <person name="Silva D."/>
            <person name="Sinclair B."/>
            <person name="Sperling S."/>
            <person name="Stupka E."/>
            <person name="Sugiura K."/>
            <person name="Sultana R."/>
            <person name="Takenaka Y."/>
            <person name="Taki K."/>
            <person name="Tammoja K."/>
            <person name="Tan S.L."/>
            <person name="Tang S."/>
            <person name="Taylor M.S."/>
            <person name="Tegner J."/>
            <person name="Teichmann S.A."/>
            <person name="Ueda H.R."/>
            <person name="van Nimwegen E."/>
            <person name="Verardo R."/>
            <person name="Wei C.L."/>
            <person name="Yagi K."/>
            <person name="Yamanishi H."/>
            <person name="Zabarovsky E."/>
            <person name="Zhu S."/>
            <person name="Zimmer A."/>
            <person name="Hide W."/>
            <person name="Bult C."/>
            <person name="Grimmond S.M."/>
            <person name="Teasdale R.D."/>
            <person name="Liu E.T."/>
            <person name="Brusic V."/>
            <person name="Quackenbush J."/>
            <person name="Wahlestedt C."/>
            <person name="Mattick J.S."/>
            <person name="Hume D.A."/>
            <person name="Kai C."/>
            <person name="Sasaki D."/>
            <person name="Tomaru Y."/>
            <person name="Fukuda S."/>
            <person name="Kanamori-Katayama M."/>
            <person name="Suzuki M."/>
            <person name="Aoki J."/>
            <person name="Arakawa T."/>
            <person name="Iida J."/>
            <person name="Imamura K."/>
            <person name="Itoh M."/>
            <person name="Kato T."/>
            <person name="Kawaji H."/>
            <person name="Kawagashira N."/>
            <person name="Kawashima T."/>
            <person name="Kojima M."/>
            <person name="Kondo S."/>
            <person name="Konno H."/>
            <person name="Nakano K."/>
            <person name="Ninomiya N."/>
            <person name="Nishio T."/>
            <person name="Okada M."/>
            <person name="Plessy C."/>
            <person name="Shibata K."/>
            <person name="Shiraki T."/>
            <person name="Suzuki S."/>
            <person name="Tagami M."/>
            <person name="Waki K."/>
            <person name="Watahiki A."/>
            <person name="Okamura-Oho Y."/>
            <person name="Suzuki H."/>
            <person name="Kawai J."/>
            <person name="Hayashizaki Y."/>
        </authorList>
    </citation>
    <scope>NUCLEOTIDE SEQUENCE [LARGE SCALE MRNA]</scope>
    <source>
        <strain>C57BL/6J</strain>
        <tissue>Tongue</tissue>
    </source>
</reference>
<reference key="2">
    <citation type="journal article" date="2009" name="PLoS Biol.">
        <title>Lineage-specific biology revealed by a finished genome assembly of the mouse.</title>
        <authorList>
            <person name="Church D.M."/>
            <person name="Goodstadt L."/>
            <person name="Hillier L.W."/>
            <person name="Zody M.C."/>
            <person name="Goldstein S."/>
            <person name="She X."/>
            <person name="Bult C.J."/>
            <person name="Agarwala R."/>
            <person name="Cherry J.L."/>
            <person name="DiCuccio M."/>
            <person name="Hlavina W."/>
            <person name="Kapustin Y."/>
            <person name="Meric P."/>
            <person name="Maglott D."/>
            <person name="Birtle Z."/>
            <person name="Marques A.C."/>
            <person name="Graves T."/>
            <person name="Zhou S."/>
            <person name="Teague B."/>
            <person name="Potamousis K."/>
            <person name="Churas C."/>
            <person name="Place M."/>
            <person name="Herschleb J."/>
            <person name="Runnheim R."/>
            <person name="Forrest D."/>
            <person name="Amos-Landgraf J."/>
            <person name="Schwartz D.C."/>
            <person name="Cheng Z."/>
            <person name="Lindblad-Toh K."/>
            <person name="Eichler E.E."/>
            <person name="Ponting C.P."/>
        </authorList>
    </citation>
    <scope>NUCLEOTIDE SEQUENCE [LARGE SCALE GENOMIC DNA]</scope>
    <source>
        <strain>C57BL/6J</strain>
    </source>
</reference>
<reference key="3">
    <citation type="journal article" date="2004" name="Genome Res.">
        <title>The status, quality, and expansion of the NIH full-length cDNA project: the Mammalian Gene Collection (MGC).</title>
        <authorList>
            <consortium name="The MGC Project Team"/>
        </authorList>
    </citation>
    <scope>NUCLEOTIDE SEQUENCE [LARGE SCALE MRNA]</scope>
    <source>
        <strain>FVB/N</strain>
        <tissue>Kidney</tissue>
    </source>
</reference>
<proteinExistence type="evidence at transcript level"/>
<sequence length="261" mass="29051">MVWKITGPLQACQLLLVVLSLPQGRTSSVLTVNGRTENYILDTQHGVQASLECAVQNHTEDEELLWYREDGIVDLKNGNKINISSVCVSPINESDNGVRFTCKLQRDQTVSVTVVLNVTFPPLLSGNGFQTVEENSDVSLVCNVKSNPQAQMMWYKNNSALVLEKGRHQIHQTRESFQLSITKVKKSDNGTYSCIASSSLKMETMDFHLLVKDKVFVMPAEPIIAACVVVVLTMAFALFSRRKRIMKLCGKKNDPNSETAL</sequence>
<dbReference type="EMBL" id="AK009118">
    <property type="protein sequence ID" value="BAB26083.1"/>
    <property type="molecule type" value="mRNA"/>
</dbReference>
<dbReference type="EMBL" id="AL603842">
    <property type="status" value="NOT_ANNOTATED_CDS"/>
    <property type="molecule type" value="Genomic_DNA"/>
</dbReference>
<dbReference type="EMBL" id="BC022683">
    <property type="protein sequence ID" value="AAH22683.1"/>
    <property type="molecule type" value="mRNA"/>
</dbReference>
<dbReference type="EMBL" id="BC061082">
    <property type="protein sequence ID" value="AAH61082.1"/>
    <property type="molecule type" value="mRNA"/>
</dbReference>
<dbReference type="CCDS" id="CCDS25072.1"/>
<dbReference type="RefSeq" id="NP_079931.1">
    <property type="nucleotide sequence ID" value="NM_025655.3"/>
</dbReference>
<dbReference type="RefSeq" id="XP_006534010.2">
    <property type="nucleotide sequence ID" value="XM_006533947.3"/>
</dbReference>
<dbReference type="RefSeq" id="XP_006534013.1">
    <property type="nucleotide sequence ID" value="XM_006533950.3"/>
</dbReference>
<dbReference type="SMR" id="Q9D7L8"/>
<dbReference type="FunCoup" id="Q9D7L8">
    <property type="interactions" value="87"/>
</dbReference>
<dbReference type="IntAct" id="Q9D7L8">
    <property type="interactions" value="1"/>
</dbReference>
<dbReference type="MINT" id="Q9D7L8"/>
<dbReference type="STRING" id="10090.ENSMUSP00000099553"/>
<dbReference type="GlyCosmos" id="Q9D7L8">
    <property type="glycosylation" value="6 sites, No reported glycans"/>
</dbReference>
<dbReference type="GlyGen" id="Q9D7L8">
    <property type="glycosylation" value="6 sites"/>
</dbReference>
<dbReference type="PhosphoSitePlus" id="Q9D7L8"/>
<dbReference type="SwissPalm" id="Q9D7L8"/>
<dbReference type="jPOST" id="Q9D7L8"/>
<dbReference type="PaxDb" id="10090-ENSMUSP00000099553"/>
<dbReference type="ProteomicsDB" id="259578"/>
<dbReference type="Antibodypedia" id="15126">
    <property type="antibodies" value="60 antibodies from 22 providers"/>
</dbReference>
<dbReference type="DNASU" id="66601"/>
<dbReference type="Ensembl" id="ENSMUST00000072633.4">
    <property type="protein sequence ID" value="ENSMUSP00000072427.4"/>
    <property type="gene ID" value="ENSMUSG00000020839.17"/>
</dbReference>
<dbReference type="Ensembl" id="ENSMUST00000102495.8">
    <property type="protein sequence ID" value="ENSMUSP00000099553.2"/>
    <property type="gene ID" value="ENSMUSG00000020839.17"/>
</dbReference>
<dbReference type="GeneID" id="66601"/>
<dbReference type="KEGG" id="mmu:66601"/>
<dbReference type="UCSC" id="uc007kgc.1">
    <property type="organism name" value="mouse"/>
</dbReference>
<dbReference type="AGR" id="MGI:1913851"/>
<dbReference type="CTD" id="388364"/>
<dbReference type="MGI" id="MGI:1913851">
    <property type="gene designation" value="Tmigd1"/>
</dbReference>
<dbReference type="VEuPathDB" id="HostDB:ENSMUSG00000020839"/>
<dbReference type="eggNOG" id="ENOG502RZR9">
    <property type="taxonomic scope" value="Eukaryota"/>
</dbReference>
<dbReference type="GeneTree" id="ENSGT00510000048311"/>
<dbReference type="HOGENOM" id="CLU_082747_0_0_1"/>
<dbReference type="InParanoid" id="Q9D7L8"/>
<dbReference type="OMA" id="TCQLARN"/>
<dbReference type="OrthoDB" id="6106100at2759"/>
<dbReference type="PhylomeDB" id="Q9D7L8"/>
<dbReference type="TreeFam" id="TF336634"/>
<dbReference type="BioGRID-ORCS" id="66601">
    <property type="hits" value="0 hits in 76 CRISPR screens"/>
</dbReference>
<dbReference type="PRO" id="PR:Q9D7L8"/>
<dbReference type="Proteomes" id="UP000000589">
    <property type="component" value="Chromosome 11"/>
</dbReference>
<dbReference type="RNAct" id="Q9D7L8">
    <property type="molecule type" value="protein"/>
</dbReference>
<dbReference type="Bgee" id="ENSMUSG00000020839">
    <property type="expression patterns" value="Expressed in right colon and 100 other cell types or tissues"/>
</dbReference>
<dbReference type="ExpressionAtlas" id="Q9D7L8">
    <property type="expression patterns" value="baseline and differential"/>
</dbReference>
<dbReference type="GO" id="GO:0005912">
    <property type="term" value="C:adherens junction"/>
    <property type="evidence" value="ECO:0000266"/>
    <property type="project" value="MGI"/>
</dbReference>
<dbReference type="GO" id="GO:0009986">
    <property type="term" value="C:cell surface"/>
    <property type="evidence" value="ECO:0000314"/>
    <property type="project" value="MGI"/>
</dbReference>
<dbReference type="GO" id="GO:0005737">
    <property type="term" value="C:cytoplasm"/>
    <property type="evidence" value="ECO:0000250"/>
    <property type="project" value="UniProtKB"/>
</dbReference>
<dbReference type="GO" id="GO:0005829">
    <property type="term" value="C:cytosol"/>
    <property type="evidence" value="ECO:0007669"/>
    <property type="project" value="Ensembl"/>
</dbReference>
<dbReference type="GO" id="GO:0005739">
    <property type="term" value="C:mitochondrion"/>
    <property type="evidence" value="ECO:0007669"/>
    <property type="project" value="Ensembl"/>
</dbReference>
<dbReference type="GO" id="GO:0005886">
    <property type="term" value="C:plasma membrane"/>
    <property type="evidence" value="ECO:0000250"/>
    <property type="project" value="UniProtKB"/>
</dbReference>
<dbReference type="GO" id="GO:0098631">
    <property type="term" value="F:cell adhesion mediator activity"/>
    <property type="evidence" value="ECO:0000314"/>
    <property type="project" value="MGI"/>
</dbReference>
<dbReference type="GO" id="GO:0098632">
    <property type="term" value="F:cell-cell adhesion mediator activity"/>
    <property type="evidence" value="ECO:0000314"/>
    <property type="project" value="MGI"/>
</dbReference>
<dbReference type="GO" id="GO:0042803">
    <property type="term" value="F:protein homodimerization activity"/>
    <property type="evidence" value="ECO:0000353"/>
    <property type="project" value="MGI"/>
</dbReference>
<dbReference type="GO" id="GO:1904970">
    <property type="term" value="P:brush border assembly"/>
    <property type="evidence" value="ECO:0000315"/>
    <property type="project" value="MGI"/>
</dbReference>
<dbReference type="GO" id="GO:0098743">
    <property type="term" value="P:cell aggregation"/>
    <property type="evidence" value="ECO:0000314"/>
    <property type="project" value="MGI"/>
</dbReference>
<dbReference type="GO" id="GO:0016477">
    <property type="term" value="P:cell migration"/>
    <property type="evidence" value="ECO:0000314"/>
    <property type="project" value="MGI"/>
</dbReference>
<dbReference type="GO" id="GO:0098609">
    <property type="term" value="P:cell-cell adhesion"/>
    <property type="evidence" value="ECO:0000314"/>
    <property type="project" value="MGI"/>
</dbReference>
<dbReference type="GO" id="GO:0045216">
    <property type="term" value="P:cell-cell junction organization"/>
    <property type="evidence" value="ECO:0000315"/>
    <property type="project" value="MGI"/>
</dbReference>
<dbReference type="GO" id="GO:0071447">
    <property type="term" value="P:cellular response to hydroperoxide"/>
    <property type="evidence" value="ECO:0000314"/>
    <property type="project" value="MGI"/>
</dbReference>
<dbReference type="GO" id="GO:0060574">
    <property type="term" value="P:intestinal epithelial cell maturation"/>
    <property type="evidence" value="ECO:0000315"/>
    <property type="project" value="MGI"/>
</dbReference>
<dbReference type="GO" id="GO:0061582">
    <property type="term" value="P:intestinal epithelial cell migration"/>
    <property type="evidence" value="ECO:0000266"/>
    <property type="project" value="MGI"/>
</dbReference>
<dbReference type="GO" id="GO:0043066">
    <property type="term" value="P:negative regulation of apoptotic process"/>
    <property type="evidence" value="ECO:0000250"/>
    <property type="project" value="UniProtKB"/>
</dbReference>
<dbReference type="GO" id="GO:0050680">
    <property type="term" value="P:negative regulation of epithelial cell proliferation"/>
    <property type="evidence" value="ECO:0000315"/>
    <property type="project" value="MGI"/>
</dbReference>
<dbReference type="GO" id="GO:0008104">
    <property type="term" value="P:protein localization"/>
    <property type="evidence" value="ECO:0000315"/>
    <property type="project" value="MGI"/>
</dbReference>
<dbReference type="GO" id="GO:0030334">
    <property type="term" value="P:regulation of cell migration"/>
    <property type="evidence" value="ECO:0000250"/>
    <property type="project" value="UniProtKB"/>
</dbReference>
<dbReference type="GO" id="GO:0042127">
    <property type="term" value="P:regulation of cell population proliferation"/>
    <property type="evidence" value="ECO:0000250"/>
    <property type="project" value="UniProtKB"/>
</dbReference>
<dbReference type="GO" id="GO:0090559">
    <property type="term" value="P:regulation of membrane permeability"/>
    <property type="evidence" value="ECO:0000250"/>
    <property type="project" value="UniProtKB"/>
</dbReference>
<dbReference type="GO" id="GO:0007584">
    <property type="term" value="P:response to nutrient"/>
    <property type="evidence" value="ECO:0000314"/>
    <property type="project" value="MGI"/>
</dbReference>
<dbReference type="CDD" id="cd00096">
    <property type="entry name" value="Ig"/>
    <property type="match status" value="1"/>
</dbReference>
<dbReference type="FunFam" id="2.60.40.10:FF:001938">
    <property type="entry name" value="Transmembrane and immunoglobulin domain-containing protein 1"/>
    <property type="match status" value="1"/>
</dbReference>
<dbReference type="Gene3D" id="2.60.40.10">
    <property type="entry name" value="Immunoglobulins"/>
    <property type="match status" value="2"/>
</dbReference>
<dbReference type="InterPro" id="IPR007110">
    <property type="entry name" value="Ig-like_dom"/>
</dbReference>
<dbReference type="InterPro" id="IPR036179">
    <property type="entry name" value="Ig-like_dom_sf"/>
</dbReference>
<dbReference type="InterPro" id="IPR013783">
    <property type="entry name" value="Ig-like_fold"/>
</dbReference>
<dbReference type="InterPro" id="IPR013098">
    <property type="entry name" value="Ig_I-set"/>
</dbReference>
<dbReference type="InterPro" id="IPR003599">
    <property type="entry name" value="Ig_sub"/>
</dbReference>
<dbReference type="InterPro" id="IPR003598">
    <property type="entry name" value="Ig_sub2"/>
</dbReference>
<dbReference type="PANTHER" id="PTHR46013:SF7">
    <property type="entry name" value="IG-LIKE DOMAIN-CONTAINING PROTEIN"/>
    <property type="match status" value="1"/>
</dbReference>
<dbReference type="PANTHER" id="PTHR46013">
    <property type="entry name" value="VASCULAR CELL ADHESION MOLECULE 1"/>
    <property type="match status" value="1"/>
</dbReference>
<dbReference type="Pfam" id="PF07679">
    <property type="entry name" value="I-set"/>
    <property type="match status" value="1"/>
</dbReference>
<dbReference type="SMART" id="SM00409">
    <property type="entry name" value="IG"/>
    <property type="match status" value="2"/>
</dbReference>
<dbReference type="SMART" id="SM00408">
    <property type="entry name" value="IGc2"/>
    <property type="match status" value="1"/>
</dbReference>
<dbReference type="SUPFAM" id="SSF48726">
    <property type="entry name" value="Immunoglobulin"/>
    <property type="match status" value="1"/>
</dbReference>
<dbReference type="PROSITE" id="PS50835">
    <property type="entry name" value="IG_LIKE"/>
    <property type="match status" value="2"/>
</dbReference>
<protein>
    <recommendedName>
        <fullName>Transmembrane and immunoglobulin domain-containing protein 1</fullName>
    </recommendedName>
</protein>
<comment type="function">
    <text evidence="1">May control cell-cell adhesion, cell migration and proliferation, cell morphology, and protects renal epithelial cells from oxidative cell injury to promote cell survival.</text>
</comment>
<comment type="subunit">
    <text evidence="1">Homodimer.</text>
</comment>
<comment type="subcellular location">
    <subcellularLocation>
        <location evidence="1">Cell membrane</location>
        <topology evidence="1">Single-pass type I membrane protein</topology>
    </subcellularLocation>
    <subcellularLocation>
        <location evidence="1">Cytoplasm</location>
    </subcellularLocation>
</comment>
<comment type="PTM">
    <text evidence="1">N-glycosylated.</text>
</comment>
<organism>
    <name type="scientific">Mus musculus</name>
    <name type="common">Mouse</name>
    <dbReference type="NCBI Taxonomy" id="10090"/>
    <lineage>
        <taxon>Eukaryota</taxon>
        <taxon>Metazoa</taxon>
        <taxon>Chordata</taxon>
        <taxon>Craniata</taxon>
        <taxon>Vertebrata</taxon>
        <taxon>Euteleostomi</taxon>
        <taxon>Mammalia</taxon>
        <taxon>Eutheria</taxon>
        <taxon>Euarchontoglires</taxon>
        <taxon>Glires</taxon>
        <taxon>Rodentia</taxon>
        <taxon>Myomorpha</taxon>
        <taxon>Muroidea</taxon>
        <taxon>Muridae</taxon>
        <taxon>Murinae</taxon>
        <taxon>Mus</taxon>
        <taxon>Mus</taxon>
    </lineage>
</organism>